<protein>
    <recommendedName>
        <fullName evidence="1">Exodeoxyribonuclease 7 large subunit</fullName>
        <ecNumber evidence="1">3.1.11.6</ecNumber>
    </recommendedName>
    <alternativeName>
        <fullName evidence="1">Exodeoxyribonuclease VII large subunit</fullName>
        <shortName evidence="1">Exonuclease VII large subunit</shortName>
    </alternativeName>
</protein>
<sequence length="521" mass="56318">MSEAASESRTNATEYTVSEISGALKRTVEDVFGNVRVRGEISGYRGPHSSGHAYFALKDDRARLDAVVWKGTMSRLKFRPEEGMEVIATGKLTTYPGKSNYQIVIDNLEPAGAGALMALLEERKRRLQAEGLFDAGRKRRLPFMPRTIGVVTSPTGSVIRDIIHRIKDRFPLHVLVWPVRVQGDTASAEVTNAVTGFNALAWDGSIQRPDLLIVARGGGSLEDLWGFNDEALARAVAASGIPVISAVGHETDWTLIDLVADVRAPTPTGAAEIAVPVKADLEATLASLGARLKAAVLRNFERKRQAARAAARALPSPDQLLALPRRRLDEATSRLGRGLSVSVDRKRARLQGQRLTPATLSRRINEARTLTGRDLARAQAAFFAIVRERRARFARTATRLSPAPIARRQKLQADTLAALARRQDRVISLRLERLRGQLSQAERLLTTLSHKAVLARGFALVKNADGAVIKQAADVVSGMALTLEFADGTADAVATSGAARPKPAAKPSTKAKEPGNQGSLF</sequence>
<keyword id="KW-0963">Cytoplasm</keyword>
<keyword id="KW-0269">Exonuclease</keyword>
<keyword id="KW-0378">Hydrolase</keyword>
<keyword id="KW-0540">Nuclease</keyword>
<comment type="function">
    <text evidence="1">Bidirectionally degrades single-stranded DNA into large acid-insoluble oligonucleotides, which are then degraded further into small acid-soluble oligonucleotides.</text>
</comment>
<comment type="catalytic activity">
    <reaction evidence="1">
        <text>Exonucleolytic cleavage in either 5'- to 3'- or 3'- to 5'-direction to yield nucleoside 5'-phosphates.</text>
        <dbReference type="EC" id="3.1.11.6"/>
    </reaction>
</comment>
<comment type="subunit">
    <text evidence="1">Heterooligomer composed of large and small subunits.</text>
</comment>
<comment type="subcellular location">
    <subcellularLocation>
        <location evidence="1">Cytoplasm</location>
    </subcellularLocation>
</comment>
<comment type="similarity">
    <text evidence="1">Belongs to the XseA family.</text>
</comment>
<evidence type="ECO:0000255" key="1">
    <source>
        <dbReference type="HAMAP-Rule" id="MF_00378"/>
    </source>
</evidence>
<evidence type="ECO:0000256" key="2">
    <source>
        <dbReference type="SAM" id="MobiDB-lite"/>
    </source>
</evidence>
<proteinExistence type="inferred from homology"/>
<reference key="1">
    <citation type="journal article" date="2000" name="DNA Res.">
        <title>Complete genome structure of the nitrogen-fixing symbiotic bacterium Mesorhizobium loti.</title>
        <authorList>
            <person name="Kaneko T."/>
            <person name="Nakamura Y."/>
            <person name="Sato S."/>
            <person name="Asamizu E."/>
            <person name="Kato T."/>
            <person name="Sasamoto S."/>
            <person name="Watanabe A."/>
            <person name="Idesawa K."/>
            <person name="Ishikawa A."/>
            <person name="Kawashima K."/>
            <person name="Kimura T."/>
            <person name="Kishida Y."/>
            <person name="Kiyokawa C."/>
            <person name="Kohara M."/>
            <person name="Matsumoto M."/>
            <person name="Matsuno A."/>
            <person name="Mochizuki Y."/>
            <person name="Nakayama S."/>
            <person name="Nakazaki N."/>
            <person name="Shimpo S."/>
            <person name="Sugimoto M."/>
            <person name="Takeuchi C."/>
            <person name="Yamada M."/>
            <person name="Tabata S."/>
        </authorList>
    </citation>
    <scope>NUCLEOTIDE SEQUENCE [LARGE SCALE GENOMIC DNA]</scope>
    <source>
        <strain>LMG 29417 / CECT 9101 / MAFF 303099</strain>
    </source>
</reference>
<name>EX7L_RHILO</name>
<gene>
    <name evidence="1" type="primary">xseA</name>
    <name type="ordered locus">mll6896</name>
</gene>
<dbReference type="EC" id="3.1.11.6" evidence="1"/>
<dbReference type="EMBL" id="BA000012">
    <property type="protein sequence ID" value="BAB53097.1"/>
    <property type="molecule type" value="Genomic_DNA"/>
</dbReference>
<dbReference type="RefSeq" id="WP_010914407.1">
    <property type="nucleotide sequence ID" value="NC_002678.2"/>
</dbReference>
<dbReference type="SMR" id="Q987V3"/>
<dbReference type="KEGG" id="mlo:mll6896"/>
<dbReference type="PATRIC" id="fig|266835.9.peg.5487"/>
<dbReference type="eggNOG" id="COG1570">
    <property type="taxonomic scope" value="Bacteria"/>
</dbReference>
<dbReference type="HOGENOM" id="CLU_023625_3_1_5"/>
<dbReference type="Proteomes" id="UP000000552">
    <property type="component" value="Chromosome"/>
</dbReference>
<dbReference type="GO" id="GO:0005737">
    <property type="term" value="C:cytoplasm"/>
    <property type="evidence" value="ECO:0007669"/>
    <property type="project" value="UniProtKB-SubCell"/>
</dbReference>
<dbReference type="GO" id="GO:0009318">
    <property type="term" value="C:exodeoxyribonuclease VII complex"/>
    <property type="evidence" value="ECO:0007669"/>
    <property type="project" value="InterPro"/>
</dbReference>
<dbReference type="GO" id="GO:0008855">
    <property type="term" value="F:exodeoxyribonuclease VII activity"/>
    <property type="evidence" value="ECO:0007669"/>
    <property type="project" value="UniProtKB-UniRule"/>
</dbReference>
<dbReference type="GO" id="GO:0003676">
    <property type="term" value="F:nucleic acid binding"/>
    <property type="evidence" value="ECO:0007669"/>
    <property type="project" value="InterPro"/>
</dbReference>
<dbReference type="GO" id="GO:0006308">
    <property type="term" value="P:DNA catabolic process"/>
    <property type="evidence" value="ECO:0007669"/>
    <property type="project" value="UniProtKB-UniRule"/>
</dbReference>
<dbReference type="CDD" id="cd04489">
    <property type="entry name" value="ExoVII_LU_OBF"/>
    <property type="match status" value="1"/>
</dbReference>
<dbReference type="HAMAP" id="MF_00378">
    <property type="entry name" value="Exonuc_7_L"/>
    <property type="match status" value="1"/>
</dbReference>
<dbReference type="InterPro" id="IPR003753">
    <property type="entry name" value="Exonuc_VII_L"/>
</dbReference>
<dbReference type="InterPro" id="IPR020579">
    <property type="entry name" value="Exonuc_VII_lsu_C"/>
</dbReference>
<dbReference type="InterPro" id="IPR025824">
    <property type="entry name" value="OB-fold_nuc-bd_dom"/>
</dbReference>
<dbReference type="NCBIfam" id="TIGR00237">
    <property type="entry name" value="xseA"/>
    <property type="match status" value="1"/>
</dbReference>
<dbReference type="PANTHER" id="PTHR30008">
    <property type="entry name" value="EXODEOXYRIBONUCLEASE 7 LARGE SUBUNIT"/>
    <property type="match status" value="1"/>
</dbReference>
<dbReference type="PANTHER" id="PTHR30008:SF0">
    <property type="entry name" value="EXODEOXYRIBONUCLEASE 7 LARGE SUBUNIT"/>
    <property type="match status" value="1"/>
</dbReference>
<dbReference type="Pfam" id="PF02601">
    <property type="entry name" value="Exonuc_VII_L"/>
    <property type="match status" value="1"/>
</dbReference>
<dbReference type="Pfam" id="PF13742">
    <property type="entry name" value="tRNA_anti_2"/>
    <property type="match status" value="1"/>
</dbReference>
<feature type="chain" id="PRO_0000197870" description="Exodeoxyribonuclease 7 large subunit">
    <location>
        <begin position="1"/>
        <end position="521"/>
    </location>
</feature>
<feature type="region of interest" description="Disordered" evidence="2">
    <location>
        <begin position="494"/>
        <end position="521"/>
    </location>
</feature>
<feature type="compositionally biased region" description="Low complexity" evidence="2">
    <location>
        <begin position="498"/>
        <end position="508"/>
    </location>
</feature>
<organism>
    <name type="scientific">Mesorhizobium japonicum (strain LMG 29417 / CECT 9101 / MAFF 303099)</name>
    <name type="common">Mesorhizobium loti (strain MAFF 303099)</name>
    <dbReference type="NCBI Taxonomy" id="266835"/>
    <lineage>
        <taxon>Bacteria</taxon>
        <taxon>Pseudomonadati</taxon>
        <taxon>Pseudomonadota</taxon>
        <taxon>Alphaproteobacteria</taxon>
        <taxon>Hyphomicrobiales</taxon>
        <taxon>Phyllobacteriaceae</taxon>
        <taxon>Mesorhizobium</taxon>
    </lineage>
</organism>
<accession>Q987V3</accession>